<feature type="signal peptide" evidence="2">
    <location>
        <begin position="1"/>
        <end position="18"/>
    </location>
</feature>
<feature type="chain" id="PRO_0000023915" description="Peptidoglycan-recognition protein SD">
    <location>
        <begin position="19"/>
        <end position="186"/>
    </location>
</feature>
<feature type="domain" description="N-acetylmuramoyl-L-alanine amidase" evidence="2">
    <location>
        <begin position="47"/>
        <end position="169"/>
    </location>
</feature>
<feature type="glycosylation site" description="N-linked (GlcNAc...) asparagine" evidence="2">
    <location>
        <position position="181"/>
    </location>
</feature>
<feature type="disulfide bond" evidence="1">
    <location>
        <begin position="57"/>
        <end position="63"/>
    </location>
</feature>
<feature type="sequence variant" description="In strain: Sim1, Sim2, Sim3, Sim4, Sim5, Sim6, Sim7 and Sim8.">
    <original>Q</original>
    <variation>R</variation>
    <location>
        <position position="127"/>
    </location>
</feature>
<feature type="sequence variant" description="In strain: Sim2, Sim3, Sim6, Sim7 and Sim8.">
    <original>K</original>
    <variation>R</variation>
    <location>
        <position position="138"/>
    </location>
</feature>
<feature type="sequence variant" description="In strain: Sim5.">
    <original>A</original>
    <variation>T</variation>
    <location>
        <position position="171"/>
    </location>
</feature>
<protein>
    <recommendedName>
        <fullName>Peptidoglycan-recognition protein SD</fullName>
    </recommendedName>
</protein>
<comment type="function">
    <text evidence="1">Peptidoglycan-recognition protein that plays a key role in innate immunity by binding to peptidoglycans (PGN) of Gram-positive bacteria and activating the Toll pathway. Has no activity against on Gram-negative bacteria and fungi. Shows some partial redundancy with PRPGP-SA in Gram-positive bacteria recognition. May act by activating the proteolytic cleavage of Spatzle and the subsequent activation of Toll pathway. Recognizes S.aureus PGN (By similarity).</text>
</comment>
<comment type="subcellular location">
    <subcellularLocation>
        <location evidence="1">Secreted</location>
    </subcellularLocation>
</comment>
<comment type="similarity">
    <text evidence="3">Belongs to the N-acetylmuramoyl-L-alanine amidase 2 family.</text>
</comment>
<keyword id="KW-1015">Disulfide bond</keyword>
<keyword id="KW-0325">Glycoprotein</keyword>
<keyword id="KW-0391">Immunity</keyword>
<keyword id="KW-0399">Innate immunity</keyword>
<keyword id="KW-0964">Secreted</keyword>
<keyword id="KW-0732">Signal</keyword>
<proteinExistence type="inferred from homology"/>
<accession>Q70PR8</accession>
<accession>Q6V6G1</accession>
<accession>Q6V6G3</accession>
<accession>Q6V6G4</accession>
<accession>Q6V6G5</accession>
<accession>Q6V6G7</accession>
<organism>
    <name type="scientific">Drosophila simulans</name>
    <name type="common">Fruit fly</name>
    <dbReference type="NCBI Taxonomy" id="7240"/>
    <lineage>
        <taxon>Eukaryota</taxon>
        <taxon>Metazoa</taxon>
        <taxon>Ecdysozoa</taxon>
        <taxon>Arthropoda</taxon>
        <taxon>Hexapoda</taxon>
        <taxon>Insecta</taxon>
        <taxon>Pterygota</taxon>
        <taxon>Neoptera</taxon>
        <taxon>Endopterygota</taxon>
        <taxon>Diptera</taxon>
        <taxon>Brachycera</taxon>
        <taxon>Muscomorpha</taxon>
        <taxon>Ephydroidea</taxon>
        <taxon>Drosophilidae</taxon>
        <taxon>Drosophila</taxon>
        <taxon>Sophophora</taxon>
    </lineage>
</organism>
<sequence length="186" mass="20125">MTWIGLLIVGLTAIAVQGEVPIVTRAEWNAKPPNGAIDSMETPLPRAVIAHTAGGACADDVTCSQHMRNLQNFQMSKQKFSDIGYHYLIGGNGKVYEGRSPSQRGAFAGPNNDGSLGIAFIGNFEKQAPNKEALDAAKELLEQAVKQAQLVEGYKLLGHRQVSATMSPGEALYALIQQWPNWSEEM</sequence>
<dbReference type="EMBL" id="AJ556634">
    <property type="protein sequence ID" value="CAD89199.1"/>
    <property type="molecule type" value="Genomic_DNA"/>
</dbReference>
<dbReference type="EMBL" id="AY349823">
    <property type="protein sequence ID" value="AAQ64774.1"/>
    <property type="molecule type" value="Genomic_DNA"/>
</dbReference>
<dbReference type="EMBL" id="AY349824">
    <property type="protein sequence ID" value="AAQ64775.1"/>
    <property type="molecule type" value="Genomic_DNA"/>
</dbReference>
<dbReference type="EMBL" id="AY349825">
    <property type="protein sequence ID" value="AAQ64776.1"/>
    <property type="molecule type" value="Genomic_DNA"/>
</dbReference>
<dbReference type="EMBL" id="AY349826">
    <property type="protein sequence ID" value="AAQ64777.1"/>
    <property type="molecule type" value="Genomic_DNA"/>
</dbReference>
<dbReference type="EMBL" id="AY349827">
    <property type="protein sequence ID" value="AAQ64778.1"/>
    <property type="molecule type" value="Genomic_DNA"/>
</dbReference>
<dbReference type="EMBL" id="AY349828">
    <property type="protein sequence ID" value="AAQ64779.1"/>
    <property type="molecule type" value="Genomic_DNA"/>
</dbReference>
<dbReference type="EMBL" id="AY349829">
    <property type="protein sequence ID" value="AAQ64780.1"/>
    <property type="molecule type" value="Genomic_DNA"/>
</dbReference>
<dbReference type="EMBL" id="AY349830">
    <property type="protein sequence ID" value="AAQ64781.1"/>
    <property type="molecule type" value="Genomic_DNA"/>
</dbReference>
<dbReference type="SMR" id="Q70PR8"/>
<dbReference type="GlyCosmos" id="Q70PR8">
    <property type="glycosylation" value="1 site, No reported glycans"/>
</dbReference>
<dbReference type="OrthoDB" id="10001926at2759"/>
<dbReference type="GO" id="GO:0005576">
    <property type="term" value="C:extracellular region"/>
    <property type="evidence" value="ECO:0000250"/>
    <property type="project" value="UniProtKB"/>
</dbReference>
<dbReference type="GO" id="GO:0005615">
    <property type="term" value="C:extracellular space"/>
    <property type="evidence" value="ECO:0007669"/>
    <property type="project" value="EnsemblMetazoa"/>
</dbReference>
<dbReference type="GO" id="GO:0008745">
    <property type="term" value="F:N-acetylmuramoyl-L-alanine amidase activity"/>
    <property type="evidence" value="ECO:0007669"/>
    <property type="project" value="InterPro"/>
</dbReference>
<dbReference type="GO" id="GO:0042834">
    <property type="term" value="F:peptidoglycan binding"/>
    <property type="evidence" value="ECO:0007669"/>
    <property type="project" value="EnsemblMetazoa"/>
</dbReference>
<dbReference type="GO" id="GO:0008270">
    <property type="term" value="F:zinc ion binding"/>
    <property type="evidence" value="ECO:0007669"/>
    <property type="project" value="InterPro"/>
</dbReference>
<dbReference type="GO" id="GO:0050829">
    <property type="term" value="P:defense response to Gram-negative bacterium"/>
    <property type="evidence" value="ECO:0007669"/>
    <property type="project" value="EnsemblMetazoa"/>
</dbReference>
<dbReference type="GO" id="GO:0050830">
    <property type="term" value="P:defense response to Gram-positive bacterium"/>
    <property type="evidence" value="ECO:0000250"/>
    <property type="project" value="UniProtKB"/>
</dbReference>
<dbReference type="GO" id="GO:0032499">
    <property type="term" value="P:detection of peptidoglycan"/>
    <property type="evidence" value="ECO:0007669"/>
    <property type="project" value="EnsemblMetazoa"/>
</dbReference>
<dbReference type="GO" id="GO:0045087">
    <property type="term" value="P:innate immune response"/>
    <property type="evidence" value="ECO:0007669"/>
    <property type="project" value="UniProtKB-KW"/>
</dbReference>
<dbReference type="GO" id="GO:0009253">
    <property type="term" value="P:peptidoglycan catabolic process"/>
    <property type="evidence" value="ECO:0007669"/>
    <property type="project" value="InterPro"/>
</dbReference>
<dbReference type="GO" id="GO:0061059">
    <property type="term" value="P:positive regulation of peptidoglycan recognition protein signaling pathway"/>
    <property type="evidence" value="ECO:0007669"/>
    <property type="project" value="EnsemblMetazoa"/>
</dbReference>
<dbReference type="CDD" id="cd06583">
    <property type="entry name" value="PGRP"/>
    <property type="match status" value="1"/>
</dbReference>
<dbReference type="FunFam" id="3.40.80.10:FF:000001">
    <property type="entry name" value="Peptidoglycan recognition protein 1"/>
    <property type="match status" value="1"/>
</dbReference>
<dbReference type="Gene3D" id="3.40.80.10">
    <property type="entry name" value="Peptidoglycan recognition protein-like"/>
    <property type="match status" value="1"/>
</dbReference>
<dbReference type="InterPro" id="IPR036505">
    <property type="entry name" value="Amidase/PGRP_sf"/>
</dbReference>
<dbReference type="InterPro" id="IPR002502">
    <property type="entry name" value="Amidase_domain"/>
</dbReference>
<dbReference type="InterPro" id="IPR017331">
    <property type="entry name" value="Peptidoglycan_recognition"/>
</dbReference>
<dbReference type="InterPro" id="IPR015510">
    <property type="entry name" value="PGRP"/>
</dbReference>
<dbReference type="InterPro" id="IPR006619">
    <property type="entry name" value="PGRP_domain_met/bac"/>
</dbReference>
<dbReference type="PANTHER" id="PTHR11022">
    <property type="entry name" value="PEPTIDOGLYCAN RECOGNITION PROTEIN"/>
    <property type="match status" value="1"/>
</dbReference>
<dbReference type="PANTHER" id="PTHR11022:SF75">
    <property type="entry name" value="PEPTIDOGLYCAN-RECOGNITION PROTEIN SB1-RELATED"/>
    <property type="match status" value="1"/>
</dbReference>
<dbReference type="Pfam" id="PF01510">
    <property type="entry name" value="Amidase_2"/>
    <property type="match status" value="1"/>
</dbReference>
<dbReference type="PIRSF" id="PIRSF037945">
    <property type="entry name" value="PGRPs"/>
    <property type="match status" value="1"/>
</dbReference>
<dbReference type="SMART" id="SM00644">
    <property type="entry name" value="Ami_2"/>
    <property type="match status" value="1"/>
</dbReference>
<dbReference type="SMART" id="SM00701">
    <property type="entry name" value="PGRP"/>
    <property type="match status" value="1"/>
</dbReference>
<dbReference type="SUPFAM" id="SSF55846">
    <property type="entry name" value="N-acetylmuramoyl-L-alanine amidase-like"/>
    <property type="match status" value="1"/>
</dbReference>
<evidence type="ECO:0000250" key="1"/>
<evidence type="ECO:0000255" key="2"/>
<evidence type="ECO:0000305" key="3"/>
<name>PGPSD_DROSI</name>
<gene>
    <name type="primary">PGRP-SD</name>
</gene>
<reference key="1">
    <citation type="journal article" date="2003" name="J. Mol. Evol.">
        <title>The evolution of parasite recognition genes in the innate immune system: purifying selection on Drosophila melanogaster peptidoglycan recognition proteins.</title>
        <authorList>
            <person name="Jiggins F.M."/>
            <person name="Hurst G.D.D."/>
        </authorList>
    </citation>
    <scope>NUCLEOTIDE SEQUENCE [GENOMIC DNA]</scope>
    <source>
        <strain>C167.4</strain>
    </source>
</reference>
<reference key="2">
    <citation type="journal article" date="2003" name="Genetics">
        <title>Natural selection drives Drosophila immune system evolution.</title>
        <authorList>
            <person name="Schlenke T.A."/>
            <person name="Begun D.J."/>
        </authorList>
    </citation>
    <scope>NUCLEOTIDE SEQUENCE [GENOMIC DNA] OF 39-178</scope>
    <source>
        <strain>Sim1</strain>
        <strain>Sim2</strain>
        <strain>Sim3</strain>
        <strain>Sim4</strain>
        <strain>Sim5</strain>
        <strain>Sim6</strain>
        <strain>Sim7</strain>
        <strain>Sim8</strain>
    </source>
</reference>